<proteinExistence type="inferred from homology"/>
<sequence length="343" mass="39476">MEKKKIVLKNFTEDELKEFMKTIDEKPFRGSQIFSWIYKGAKTFDDMNNIPKSLRNKLEEVSCIGHIDIELKLESKVDNTKKYLFLLDDGNIIETVMMDYDSRVTVCVSNQVGCRMGCNFCASTMDGLIRNLEPWEILDQVIKIQEDTGKRVSNLVLMGSGEPLDNFENTKQFLKIINEKNGLNIGYRHITLSTCGIVPKMYELADLEIAINLALSLHSPYDEERRKIMPVANAYSIEEILNACRYYIKKTNRRVTFEYSLIKGVNDSEKEAKALAKLLKGMLCHVNLIPINKVEEREYEKPDKAFIYKFRDSLEKNNIPATVRMSMGSDISGACGQLRRKYK</sequence>
<organism>
    <name type="scientific">Clostridioides difficile (strain 630)</name>
    <name type="common">Peptoclostridium difficile</name>
    <dbReference type="NCBI Taxonomy" id="272563"/>
    <lineage>
        <taxon>Bacteria</taxon>
        <taxon>Bacillati</taxon>
        <taxon>Bacillota</taxon>
        <taxon>Clostridia</taxon>
        <taxon>Peptostreptococcales</taxon>
        <taxon>Peptostreptococcaceae</taxon>
        <taxon>Clostridioides</taxon>
    </lineage>
</organism>
<reference key="1">
    <citation type="journal article" date="2006" name="Nat. Genet.">
        <title>The multidrug-resistant human pathogen Clostridium difficile has a highly mobile, mosaic genome.</title>
        <authorList>
            <person name="Sebaihia M."/>
            <person name="Wren B.W."/>
            <person name="Mullany P."/>
            <person name="Fairweather N.F."/>
            <person name="Minton N."/>
            <person name="Stabler R."/>
            <person name="Thomson N.R."/>
            <person name="Roberts A.P."/>
            <person name="Cerdeno-Tarraga A.M."/>
            <person name="Wang H."/>
            <person name="Holden M.T.G."/>
            <person name="Wright A."/>
            <person name="Churcher C."/>
            <person name="Quail M.A."/>
            <person name="Baker S."/>
            <person name="Bason N."/>
            <person name="Brooks K."/>
            <person name="Chillingworth T."/>
            <person name="Cronin A."/>
            <person name="Davis P."/>
            <person name="Dowd L."/>
            <person name="Fraser A."/>
            <person name="Feltwell T."/>
            <person name="Hance Z."/>
            <person name="Holroyd S."/>
            <person name="Jagels K."/>
            <person name="Moule S."/>
            <person name="Mungall K."/>
            <person name="Price C."/>
            <person name="Rabbinowitsch E."/>
            <person name="Sharp S."/>
            <person name="Simmonds M."/>
            <person name="Stevens K."/>
            <person name="Unwin L."/>
            <person name="Whithead S."/>
            <person name="Dupuy B."/>
            <person name="Dougan G."/>
            <person name="Barrell B."/>
            <person name="Parkhill J."/>
        </authorList>
    </citation>
    <scope>NUCLEOTIDE SEQUENCE [LARGE SCALE GENOMIC DNA]</scope>
    <source>
        <strain>630</strain>
    </source>
</reference>
<accession>Q182S0</accession>
<gene>
    <name evidence="1" type="primary">rlmN</name>
    <name type="ordered locus">CD630_25800</name>
</gene>
<protein>
    <recommendedName>
        <fullName evidence="1">Probable dual-specificity RNA methyltransferase RlmN</fullName>
        <ecNumber evidence="1">2.1.1.192</ecNumber>
    </recommendedName>
    <alternativeName>
        <fullName evidence="1">23S rRNA (adenine(2503)-C(2))-methyltransferase</fullName>
    </alternativeName>
    <alternativeName>
        <fullName evidence="1">23S rRNA m2A2503 methyltransferase</fullName>
    </alternativeName>
    <alternativeName>
        <fullName evidence="1">Ribosomal RNA large subunit methyltransferase N</fullName>
    </alternativeName>
    <alternativeName>
        <fullName evidence="1">tRNA (adenine(37)-C(2))-methyltransferase</fullName>
    </alternativeName>
    <alternativeName>
        <fullName evidence="1">tRNA m2A37 methyltransferase</fullName>
    </alternativeName>
</protein>
<dbReference type="EC" id="2.1.1.192" evidence="1"/>
<dbReference type="EMBL" id="AM180355">
    <property type="protein sequence ID" value="CAJ69469.1"/>
    <property type="molecule type" value="Genomic_DNA"/>
</dbReference>
<dbReference type="RefSeq" id="WP_003431147.1">
    <property type="nucleotide sequence ID" value="NZ_JAUPES010000012.1"/>
</dbReference>
<dbReference type="RefSeq" id="YP_001089096.1">
    <property type="nucleotide sequence ID" value="NC_009089.1"/>
</dbReference>
<dbReference type="SMR" id="Q182S0"/>
<dbReference type="STRING" id="272563.CD630_25800"/>
<dbReference type="EnsemblBacteria" id="CAJ69469">
    <property type="protein sequence ID" value="CAJ69469"/>
    <property type="gene ID" value="CD630_25800"/>
</dbReference>
<dbReference type="GeneID" id="66354980"/>
<dbReference type="KEGG" id="cdf:CD630_25800"/>
<dbReference type="KEGG" id="pdc:CDIF630_02833"/>
<dbReference type="PATRIC" id="fig|272563.120.peg.2721"/>
<dbReference type="eggNOG" id="COG0820">
    <property type="taxonomic scope" value="Bacteria"/>
</dbReference>
<dbReference type="OrthoDB" id="9793973at2"/>
<dbReference type="PhylomeDB" id="Q182S0"/>
<dbReference type="BioCyc" id="PDIF272563:G12WB-2736-MONOMER"/>
<dbReference type="Proteomes" id="UP000001978">
    <property type="component" value="Chromosome"/>
</dbReference>
<dbReference type="GO" id="GO:0005737">
    <property type="term" value="C:cytoplasm"/>
    <property type="evidence" value="ECO:0007669"/>
    <property type="project" value="UniProtKB-SubCell"/>
</dbReference>
<dbReference type="GO" id="GO:0051539">
    <property type="term" value="F:4 iron, 4 sulfur cluster binding"/>
    <property type="evidence" value="ECO:0007669"/>
    <property type="project" value="UniProtKB-UniRule"/>
</dbReference>
<dbReference type="GO" id="GO:0046872">
    <property type="term" value="F:metal ion binding"/>
    <property type="evidence" value="ECO:0007669"/>
    <property type="project" value="UniProtKB-KW"/>
</dbReference>
<dbReference type="GO" id="GO:0070040">
    <property type="term" value="F:rRNA (adenine(2503)-C2-)-methyltransferase activity"/>
    <property type="evidence" value="ECO:0007669"/>
    <property type="project" value="UniProtKB-UniRule"/>
</dbReference>
<dbReference type="GO" id="GO:0019843">
    <property type="term" value="F:rRNA binding"/>
    <property type="evidence" value="ECO:0007669"/>
    <property type="project" value="UniProtKB-UniRule"/>
</dbReference>
<dbReference type="GO" id="GO:0002935">
    <property type="term" value="F:tRNA (adenine(37)-C2)-methyltransferase activity"/>
    <property type="evidence" value="ECO:0007669"/>
    <property type="project" value="UniProtKB-UniRule"/>
</dbReference>
<dbReference type="GO" id="GO:0000049">
    <property type="term" value="F:tRNA binding"/>
    <property type="evidence" value="ECO:0007669"/>
    <property type="project" value="UniProtKB-UniRule"/>
</dbReference>
<dbReference type="GO" id="GO:0070475">
    <property type="term" value="P:rRNA base methylation"/>
    <property type="evidence" value="ECO:0007669"/>
    <property type="project" value="UniProtKB-UniRule"/>
</dbReference>
<dbReference type="GO" id="GO:0030488">
    <property type="term" value="P:tRNA methylation"/>
    <property type="evidence" value="ECO:0007669"/>
    <property type="project" value="UniProtKB-UniRule"/>
</dbReference>
<dbReference type="CDD" id="cd01335">
    <property type="entry name" value="Radical_SAM"/>
    <property type="match status" value="1"/>
</dbReference>
<dbReference type="FunFam" id="3.20.20.70:FF:000014">
    <property type="entry name" value="Probable dual-specificity RNA methyltransferase RlmN"/>
    <property type="match status" value="1"/>
</dbReference>
<dbReference type="Gene3D" id="1.10.150.530">
    <property type="match status" value="1"/>
</dbReference>
<dbReference type="Gene3D" id="3.20.20.70">
    <property type="entry name" value="Aldolase class I"/>
    <property type="match status" value="1"/>
</dbReference>
<dbReference type="HAMAP" id="MF_01849">
    <property type="entry name" value="RNA_methyltr_RlmN"/>
    <property type="match status" value="1"/>
</dbReference>
<dbReference type="InterPro" id="IPR013785">
    <property type="entry name" value="Aldolase_TIM"/>
</dbReference>
<dbReference type="InterPro" id="IPR006638">
    <property type="entry name" value="Elp3/MiaA/NifB-like_rSAM"/>
</dbReference>
<dbReference type="InterPro" id="IPR040072">
    <property type="entry name" value="Methyltransferase_A"/>
</dbReference>
<dbReference type="InterPro" id="IPR048641">
    <property type="entry name" value="RlmN_N"/>
</dbReference>
<dbReference type="InterPro" id="IPR027492">
    <property type="entry name" value="RNA_MTrfase_RlmN"/>
</dbReference>
<dbReference type="InterPro" id="IPR004383">
    <property type="entry name" value="rRNA_lsu_MTrfase_RlmN/Cfr"/>
</dbReference>
<dbReference type="InterPro" id="IPR007197">
    <property type="entry name" value="rSAM"/>
</dbReference>
<dbReference type="NCBIfam" id="TIGR00048">
    <property type="entry name" value="rRNA_mod_RlmN"/>
    <property type="match status" value="1"/>
</dbReference>
<dbReference type="PANTHER" id="PTHR30544">
    <property type="entry name" value="23S RRNA METHYLTRANSFERASE"/>
    <property type="match status" value="1"/>
</dbReference>
<dbReference type="PANTHER" id="PTHR30544:SF5">
    <property type="entry name" value="RADICAL SAM CORE DOMAIN-CONTAINING PROTEIN"/>
    <property type="match status" value="1"/>
</dbReference>
<dbReference type="Pfam" id="PF04055">
    <property type="entry name" value="Radical_SAM"/>
    <property type="match status" value="1"/>
</dbReference>
<dbReference type="Pfam" id="PF21016">
    <property type="entry name" value="RlmN_N"/>
    <property type="match status" value="1"/>
</dbReference>
<dbReference type="PIRSF" id="PIRSF006004">
    <property type="entry name" value="CHP00048"/>
    <property type="match status" value="1"/>
</dbReference>
<dbReference type="SFLD" id="SFLDF00275">
    <property type="entry name" value="adenosine_C2_methyltransferase"/>
    <property type="match status" value="1"/>
</dbReference>
<dbReference type="SFLD" id="SFLDG01062">
    <property type="entry name" value="methyltransferase_(Class_A)"/>
    <property type="match status" value="1"/>
</dbReference>
<dbReference type="SMART" id="SM00729">
    <property type="entry name" value="Elp3"/>
    <property type="match status" value="1"/>
</dbReference>
<dbReference type="SUPFAM" id="SSF102114">
    <property type="entry name" value="Radical SAM enzymes"/>
    <property type="match status" value="1"/>
</dbReference>
<dbReference type="PROSITE" id="PS51918">
    <property type="entry name" value="RADICAL_SAM"/>
    <property type="match status" value="1"/>
</dbReference>
<keyword id="KW-0004">4Fe-4S</keyword>
<keyword id="KW-0963">Cytoplasm</keyword>
<keyword id="KW-1015">Disulfide bond</keyword>
<keyword id="KW-0408">Iron</keyword>
<keyword id="KW-0411">Iron-sulfur</keyword>
<keyword id="KW-0479">Metal-binding</keyword>
<keyword id="KW-0489">Methyltransferase</keyword>
<keyword id="KW-1185">Reference proteome</keyword>
<keyword id="KW-0698">rRNA processing</keyword>
<keyword id="KW-0949">S-adenosyl-L-methionine</keyword>
<keyword id="KW-0808">Transferase</keyword>
<keyword id="KW-0819">tRNA processing</keyword>
<comment type="function">
    <text evidence="1">Specifically methylates position 2 of adenine 2503 in 23S rRNA and position 2 of adenine 37 in tRNAs.</text>
</comment>
<comment type="catalytic activity">
    <reaction evidence="1">
        <text>adenosine(2503) in 23S rRNA + 2 reduced [2Fe-2S]-[ferredoxin] + 2 S-adenosyl-L-methionine = 2-methyladenosine(2503) in 23S rRNA + 5'-deoxyadenosine + L-methionine + 2 oxidized [2Fe-2S]-[ferredoxin] + S-adenosyl-L-homocysteine</text>
        <dbReference type="Rhea" id="RHEA:42916"/>
        <dbReference type="Rhea" id="RHEA-COMP:10000"/>
        <dbReference type="Rhea" id="RHEA-COMP:10001"/>
        <dbReference type="Rhea" id="RHEA-COMP:10152"/>
        <dbReference type="Rhea" id="RHEA-COMP:10282"/>
        <dbReference type="ChEBI" id="CHEBI:17319"/>
        <dbReference type="ChEBI" id="CHEBI:33737"/>
        <dbReference type="ChEBI" id="CHEBI:33738"/>
        <dbReference type="ChEBI" id="CHEBI:57844"/>
        <dbReference type="ChEBI" id="CHEBI:57856"/>
        <dbReference type="ChEBI" id="CHEBI:59789"/>
        <dbReference type="ChEBI" id="CHEBI:74411"/>
        <dbReference type="ChEBI" id="CHEBI:74497"/>
        <dbReference type="EC" id="2.1.1.192"/>
    </reaction>
</comment>
<comment type="catalytic activity">
    <reaction evidence="1">
        <text>adenosine(37) in tRNA + 2 reduced [2Fe-2S]-[ferredoxin] + 2 S-adenosyl-L-methionine = 2-methyladenosine(37) in tRNA + 5'-deoxyadenosine + L-methionine + 2 oxidized [2Fe-2S]-[ferredoxin] + S-adenosyl-L-homocysteine</text>
        <dbReference type="Rhea" id="RHEA:43332"/>
        <dbReference type="Rhea" id="RHEA-COMP:10000"/>
        <dbReference type="Rhea" id="RHEA-COMP:10001"/>
        <dbReference type="Rhea" id="RHEA-COMP:10162"/>
        <dbReference type="Rhea" id="RHEA-COMP:10485"/>
        <dbReference type="ChEBI" id="CHEBI:17319"/>
        <dbReference type="ChEBI" id="CHEBI:33737"/>
        <dbReference type="ChEBI" id="CHEBI:33738"/>
        <dbReference type="ChEBI" id="CHEBI:57844"/>
        <dbReference type="ChEBI" id="CHEBI:57856"/>
        <dbReference type="ChEBI" id="CHEBI:59789"/>
        <dbReference type="ChEBI" id="CHEBI:74411"/>
        <dbReference type="ChEBI" id="CHEBI:74497"/>
        <dbReference type="EC" id="2.1.1.192"/>
    </reaction>
</comment>
<comment type="cofactor">
    <cofactor evidence="1">
        <name>[4Fe-4S] cluster</name>
        <dbReference type="ChEBI" id="CHEBI:49883"/>
    </cofactor>
    <text evidence="1">Binds 1 [4Fe-4S] cluster. The cluster is coordinated with 3 cysteines and an exchangeable S-adenosyl-L-methionine.</text>
</comment>
<comment type="subcellular location">
    <subcellularLocation>
        <location evidence="1">Cytoplasm</location>
    </subcellularLocation>
</comment>
<comment type="miscellaneous">
    <text evidence="1">Reaction proceeds by a ping-pong mechanism involving intermediate methylation of a conserved cysteine residue.</text>
</comment>
<comment type="similarity">
    <text evidence="1">Belongs to the radical SAM superfamily. RlmN family.</text>
</comment>
<feature type="chain" id="PRO_0000350124" description="Probable dual-specificity RNA methyltransferase RlmN">
    <location>
        <begin position="1"/>
        <end position="343"/>
    </location>
</feature>
<feature type="domain" description="Radical SAM core" evidence="2">
    <location>
        <begin position="100"/>
        <end position="330"/>
    </location>
</feature>
<feature type="active site" description="Proton acceptor" evidence="1">
    <location>
        <position position="94"/>
    </location>
</feature>
<feature type="active site" description="S-methylcysteine intermediate" evidence="1">
    <location>
        <position position="335"/>
    </location>
</feature>
<feature type="binding site" evidence="1">
    <location>
        <position position="114"/>
    </location>
    <ligand>
        <name>[4Fe-4S] cluster</name>
        <dbReference type="ChEBI" id="CHEBI:49883"/>
        <note>4Fe-4S-S-AdoMet</note>
    </ligand>
</feature>
<feature type="binding site" evidence="1">
    <location>
        <position position="118"/>
    </location>
    <ligand>
        <name>[4Fe-4S] cluster</name>
        <dbReference type="ChEBI" id="CHEBI:49883"/>
        <note>4Fe-4S-S-AdoMet</note>
    </ligand>
</feature>
<feature type="binding site" evidence="1">
    <location>
        <position position="121"/>
    </location>
    <ligand>
        <name>[4Fe-4S] cluster</name>
        <dbReference type="ChEBI" id="CHEBI:49883"/>
        <note>4Fe-4S-S-AdoMet</note>
    </ligand>
</feature>
<feature type="binding site" evidence="1">
    <location>
        <begin position="161"/>
        <end position="162"/>
    </location>
    <ligand>
        <name>S-adenosyl-L-methionine</name>
        <dbReference type="ChEBI" id="CHEBI:59789"/>
    </ligand>
</feature>
<feature type="binding site" evidence="1">
    <location>
        <position position="193"/>
    </location>
    <ligand>
        <name>S-adenosyl-L-methionine</name>
        <dbReference type="ChEBI" id="CHEBI:59789"/>
    </ligand>
</feature>
<feature type="binding site" evidence="1">
    <location>
        <begin position="216"/>
        <end position="218"/>
    </location>
    <ligand>
        <name>S-adenosyl-L-methionine</name>
        <dbReference type="ChEBI" id="CHEBI:59789"/>
    </ligand>
</feature>
<feature type="binding site" evidence="1">
    <location>
        <position position="292"/>
    </location>
    <ligand>
        <name>S-adenosyl-L-methionine</name>
        <dbReference type="ChEBI" id="CHEBI:59789"/>
    </ligand>
</feature>
<feature type="disulfide bond" description="(transient)" evidence="1">
    <location>
        <begin position="107"/>
        <end position="335"/>
    </location>
</feature>
<evidence type="ECO:0000255" key="1">
    <source>
        <dbReference type="HAMAP-Rule" id="MF_01849"/>
    </source>
</evidence>
<evidence type="ECO:0000255" key="2">
    <source>
        <dbReference type="PROSITE-ProRule" id="PRU01266"/>
    </source>
</evidence>
<name>RLMN_CLOD6</name>